<proteinExistence type="predicted"/>
<feature type="chain" id="PRO_0000386659" description="Uncharacterized protein YdzU">
    <location>
        <begin position="1"/>
        <end position="90"/>
    </location>
</feature>
<organism>
    <name type="scientific">Bacillus subtilis (strain 168)</name>
    <dbReference type="NCBI Taxonomy" id="224308"/>
    <lineage>
        <taxon>Bacteria</taxon>
        <taxon>Bacillati</taxon>
        <taxon>Bacillota</taxon>
        <taxon>Bacilli</taxon>
        <taxon>Bacillales</taxon>
        <taxon>Bacillaceae</taxon>
        <taxon>Bacillus</taxon>
    </lineage>
</organism>
<gene>
    <name type="primary">ydzU</name>
    <name type="ordered locus">BSU06048</name>
</gene>
<dbReference type="EMBL" id="AL009126">
    <property type="protein sequence ID" value="CAX52567.1"/>
    <property type="molecule type" value="Genomic_DNA"/>
</dbReference>
<dbReference type="RefSeq" id="WP_010886427.1">
    <property type="nucleotide sequence ID" value="NZ_OZ025638.1"/>
</dbReference>
<dbReference type="RefSeq" id="YP_003097688.1">
    <property type="nucleotide sequence ID" value="NC_000964.3"/>
</dbReference>
<dbReference type="FunCoup" id="C0H3W7">
    <property type="interactions" value="1"/>
</dbReference>
<dbReference type="PaxDb" id="224308-BSU06048"/>
<dbReference type="EnsemblBacteria" id="CAX52567">
    <property type="protein sequence ID" value="CAX52567"/>
    <property type="gene ID" value="BSU_06048"/>
</dbReference>
<dbReference type="GeneID" id="8302904"/>
<dbReference type="KEGG" id="bsu:BSU06048"/>
<dbReference type="PATRIC" id="fig|224308.43.peg.635"/>
<dbReference type="InParanoid" id="C0H3W7"/>
<dbReference type="OrthoDB" id="9879004at2"/>
<dbReference type="BioCyc" id="BSUB:BSU06048-MONOMER"/>
<dbReference type="Proteomes" id="UP000001570">
    <property type="component" value="Chromosome"/>
</dbReference>
<keyword id="KW-1185">Reference proteome</keyword>
<protein>
    <recommendedName>
        <fullName>Uncharacterized protein YdzU</fullName>
    </recommendedName>
</protein>
<sequence>MKAWKVEPYEISKAMELIYKYLLLDKKDFSLEEFYKLTIYAIKWKLEQAQFPLYLESTKKSHQNVIPQPFKIKGNVLYKTVIKNSGDFEE</sequence>
<name>YDZU_BACSU</name>
<accession>C0H3W7</accession>
<reference key="1">
    <citation type="journal article" date="1997" name="Nature">
        <title>The complete genome sequence of the Gram-positive bacterium Bacillus subtilis.</title>
        <authorList>
            <person name="Kunst F."/>
            <person name="Ogasawara N."/>
            <person name="Moszer I."/>
            <person name="Albertini A.M."/>
            <person name="Alloni G."/>
            <person name="Azevedo V."/>
            <person name="Bertero M.G."/>
            <person name="Bessieres P."/>
            <person name="Bolotin A."/>
            <person name="Borchert S."/>
            <person name="Borriss R."/>
            <person name="Boursier L."/>
            <person name="Brans A."/>
            <person name="Braun M."/>
            <person name="Brignell S.C."/>
            <person name="Bron S."/>
            <person name="Brouillet S."/>
            <person name="Bruschi C.V."/>
            <person name="Caldwell B."/>
            <person name="Capuano V."/>
            <person name="Carter N.M."/>
            <person name="Choi S.-K."/>
            <person name="Codani J.-J."/>
            <person name="Connerton I.F."/>
            <person name="Cummings N.J."/>
            <person name="Daniel R.A."/>
            <person name="Denizot F."/>
            <person name="Devine K.M."/>
            <person name="Duesterhoeft A."/>
            <person name="Ehrlich S.D."/>
            <person name="Emmerson P.T."/>
            <person name="Entian K.-D."/>
            <person name="Errington J."/>
            <person name="Fabret C."/>
            <person name="Ferrari E."/>
            <person name="Foulger D."/>
            <person name="Fritz C."/>
            <person name="Fujita M."/>
            <person name="Fujita Y."/>
            <person name="Fuma S."/>
            <person name="Galizzi A."/>
            <person name="Galleron N."/>
            <person name="Ghim S.-Y."/>
            <person name="Glaser P."/>
            <person name="Goffeau A."/>
            <person name="Golightly E.J."/>
            <person name="Grandi G."/>
            <person name="Guiseppi G."/>
            <person name="Guy B.J."/>
            <person name="Haga K."/>
            <person name="Haiech J."/>
            <person name="Harwood C.R."/>
            <person name="Henaut A."/>
            <person name="Hilbert H."/>
            <person name="Holsappel S."/>
            <person name="Hosono S."/>
            <person name="Hullo M.-F."/>
            <person name="Itaya M."/>
            <person name="Jones L.-M."/>
            <person name="Joris B."/>
            <person name="Karamata D."/>
            <person name="Kasahara Y."/>
            <person name="Klaerr-Blanchard M."/>
            <person name="Klein C."/>
            <person name="Kobayashi Y."/>
            <person name="Koetter P."/>
            <person name="Koningstein G."/>
            <person name="Krogh S."/>
            <person name="Kumano M."/>
            <person name="Kurita K."/>
            <person name="Lapidus A."/>
            <person name="Lardinois S."/>
            <person name="Lauber J."/>
            <person name="Lazarevic V."/>
            <person name="Lee S.-M."/>
            <person name="Levine A."/>
            <person name="Liu H."/>
            <person name="Masuda S."/>
            <person name="Mauel C."/>
            <person name="Medigue C."/>
            <person name="Medina N."/>
            <person name="Mellado R.P."/>
            <person name="Mizuno M."/>
            <person name="Moestl D."/>
            <person name="Nakai S."/>
            <person name="Noback M."/>
            <person name="Noone D."/>
            <person name="O'Reilly M."/>
            <person name="Ogawa K."/>
            <person name="Ogiwara A."/>
            <person name="Oudega B."/>
            <person name="Park S.-H."/>
            <person name="Parro V."/>
            <person name="Pohl T.M."/>
            <person name="Portetelle D."/>
            <person name="Porwollik S."/>
            <person name="Prescott A.M."/>
            <person name="Presecan E."/>
            <person name="Pujic P."/>
            <person name="Purnelle B."/>
            <person name="Rapoport G."/>
            <person name="Rey M."/>
            <person name="Reynolds S."/>
            <person name="Rieger M."/>
            <person name="Rivolta C."/>
            <person name="Rocha E."/>
            <person name="Roche B."/>
            <person name="Rose M."/>
            <person name="Sadaie Y."/>
            <person name="Sato T."/>
            <person name="Scanlan E."/>
            <person name="Schleich S."/>
            <person name="Schroeter R."/>
            <person name="Scoffone F."/>
            <person name="Sekiguchi J."/>
            <person name="Sekowska A."/>
            <person name="Seror S.J."/>
            <person name="Serror P."/>
            <person name="Shin B.-S."/>
            <person name="Soldo B."/>
            <person name="Sorokin A."/>
            <person name="Tacconi E."/>
            <person name="Takagi T."/>
            <person name="Takahashi H."/>
            <person name="Takemaru K."/>
            <person name="Takeuchi M."/>
            <person name="Tamakoshi A."/>
            <person name="Tanaka T."/>
            <person name="Terpstra P."/>
            <person name="Tognoni A."/>
            <person name="Tosato V."/>
            <person name="Uchiyama S."/>
            <person name="Vandenbol M."/>
            <person name="Vannier F."/>
            <person name="Vassarotti A."/>
            <person name="Viari A."/>
            <person name="Wambutt R."/>
            <person name="Wedler E."/>
            <person name="Wedler H."/>
            <person name="Weitzenegger T."/>
            <person name="Winters P."/>
            <person name="Wipat A."/>
            <person name="Yamamoto H."/>
            <person name="Yamane K."/>
            <person name="Yasumoto K."/>
            <person name="Yata K."/>
            <person name="Yoshida K."/>
            <person name="Yoshikawa H.-F."/>
            <person name="Zumstein E."/>
            <person name="Yoshikawa H."/>
            <person name="Danchin A."/>
        </authorList>
    </citation>
    <scope>NUCLEOTIDE SEQUENCE [LARGE SCALE GENOMIC DNA]</scope>
    <source>
        <strain>168</strain>
    </source>
</reference>